<comment type="function">
    <text evidence="1">Catalyzes the condensation of the acetyl group of acetyl-CoA with 3-methyl-2-oxobutanoate (2-ketoisovalerate) to form 3-carboxy-3-hydroxy-4-methylpentanoate (2-isopropylmalate).</text>
</comment>
<comment type="catalytic activity">
    <reaction evidence="1">
        <text>3-methyl-2-oxobutanoate + acetyl-CoA + H2O = (2S)-2-isopropylmalate + CoA + H(+)</text>
        <dbReference type="Rhea" id="RHEA:21524"/>
        <dbReference type="ChEBI" id="CHEBI:1178"/>
        <dbReference type="ChEBI" id="CHEBI:11851"/>
        <dbReference type="ChEBI" id="CHEBI:15377"/>
        <dbReference type="ChEBI" id="CHEBI:15378"/>
        <dbReference type="ChEBI" id="CHEBI:57287"/>
        <dbReference type="ChEBI" id="CHEBI:57288"/>
        <dbReference type="EC" id="2.3.3.13"/>
    </reaction>
</comment>
<comment type="cofactor">
    <cofactor evidence="1">
        <name>Mn(2+)</name>
        <dbReference type="ChEBI" id="CHEBI:29035"/>
    </cofactor>
</comment>
<comment type="pathway">
    <text evidence="1">Amino-acid biosynthesis; L-leucine biosynthesis; L-leucine from 3-methyl-2-oxobutanoate: step 1/4.</text>
</comment>
<comment type="subunit">
    <text evidence="1">Homodimer.</text>
</comment>
<comment type="subcellular location">
    <subcellularLocation>
        <location evidence="1">Cytoplasm</location>
    </subcellularLocation>
</comment>
<comment type="similarity">
    <text evidence="1">Belongs to the alpha-IPM synthase/homocitrate synthase family. LeuA type 1 subfamily.</text>
</comment>
<name>LEU1_BURP6</name>
<accession>A3N7K7</accession>
<dbReference type="EC" id="2.3.3.13" evidence="1"/>
<dbReference type="EMBL" id="CP000570">
    <property type="protein sequence ID" value="ABN82275.1"/>
    <property type="molecule type" value="Genomic_DNA"/>
</dbReference>
<dbReference type="RefSeq" id="WP_004522419.1">
    <property type="nucleotide sequence ID" value="NC_009074.1"/>
</dbReference>
<dbReference type="SMR" id="A3N7K7"/>
<dbReference type="KEGG" id="bpd:BURPS668_1279"/>
<dbReference type="HOGENOM" id="CLU_022158_0_1_4"/>
<dbReference type="UniPathway" id="UPA00048">
    <property type="reaction ID" value="UER00070"/>
</dbReference>
<dbReference type="GO" id="GO:0005829">
    <property type="term" value="C:cytosol"/>
    <property type="evidence" value="ECO:0007669"/>
    <property type="project" value="TreeGrafter"/>
</dbReference>
<dbReference type="GO" id="GO:0003852">
    <property type="term" value="F:2-isopropylmalate synthase activity"/>
    <property type="evidence" value="ECO:0007669"/>
    <property type="project" value="UniProtKB-UniRule"/>
</dbReference>
<dbReference type="GO" id="GO:0003985">
    <property type="term" value="F:acetyl-CoA C-acetyltransferase activity"/>
    <property type="evidence" value="ECO:0007669"/>
    <property type="project" value="UniProtKB-UniRule"/>
</dbReference>
<dbReference type="GO" id="GO:0030145">
    <property type="term" value="F:manganese ion binding"/>
    <property type="evidence" value="ECO:0007669"/>
    <property type="project" value="UniProtKB-UniRule"/>
</dbReference>
<dbReference type="GO" id="GO:0009098">
    <property type="term" value="P:L-leucine biosynthetic process"/>
    <property type="evidence" value="ECO:0007669"/>
    <property type="project" value="UniProtKB-UniRule"/>
</dbReference>
<dbReference type="CDD" id="cd07940">
    <property type="entry name" value="DRE_TIM_IPMS"/>
    <property type="match status" value="1"/>
</dbReference>
<dbReference type="FunFam" id="1.10.238.260:FF:000001">
    <property type="entry name" value="2-isopropylmalate synthase"/>
    <property type="match status" value="1"/>
</dbReference>
<dbReference type="FunFam" id="3.20.20.70:FF:000010">
    <property type="entry name" value="2-isopropylmalate synthase"/>
    <property type="match status" value="1"/>
</dbReference>
<dbReference type="FunFam" id="3.30.160.270:FF:000003">
    <property type="entry name" value="2-isopropylmalate synthase"/>
    <property type="match status" value="1"/>
</dbReference>
<dbReference type="Gene3D" id="1.10.238.260">
    <property type="match status" value="1"/>
</dbReference>
<dbReference type="Gene3D" id="3.30.160.270">
    <property type="match status" value="1"/>
</dbReference>
<dbReference type="Gene3D" id="3.20.20.70">
    <property type="entry name" value="Aldolase class I"/>
    <property type="match status" value="1"/>
</dbReference>
<dbReference type="HAMAP" id="MF_01025">
    <property type="entry name" value="LeuA_type1"/>
    <property type="match status" value="1"/>
</dbReference>
<dbReference type="InterPro" id="IPR050073">
    <property type="entry name" value="2-IPM_HCS-like"/>
</dbReference>
<dbReference type="InterPro" id="IPR013709">
    <property type="entry name" value="2-isopropylmalate_synth_dimer"/>
</dbReference>
<dbReference type="InterPro" id="IPR002034">
    <property type="entry name" value="AIPM/Hcit_synth_CS"/>
</dbReference>
<dbReference type="InterPro" id="IPR013785">
    <property type="entry name" value="Aldolase_TIM"/>
</dbReference>
<dbReference type="InterPro" id="IPR054691">
    <property type="entry name" value="LeuA/HCS_post-cat"/>
</dbReference>
<dbReference type="InterPro" id="IPR036230">
    <property type="entry name" value="LeuA_allosteric_dom_sf"/>
</dbReference>
<dbReference type="InterPro" id="IPR005671">
    <property type="entry name" value="LeuA_bact_synth"/>
</dbReference>
<dbReference type="InterPro" id="IPR000891">
    <property type="entry name" value="PYR_CT"/>
</dbReference>
<dbReference type="NCBIfam" id="TIGR00973">
    <property type="entry name" value="leuA_bact"/>
    <property type="match status" value="1"/>
</dbReference>
<dbReference type="NCBIfam" id="NF002086">
    <property type="entry name" value="PRK00915.1-3"/>
    <property type="match status" value="1"/>
</dbReference>
<dbReference type="NCBIfam" id="NF002087">
    <property type="entry name" value="PRK00915.1-4"/>
    <property type="match status" value="1"/>
</dbReference>
<dbReference type="PANTHER" id="PTHR10277:SF9">
    <property type="entry name" value="2-ISOPROPYLMALATE SYNTHASE 1, CHLOROPLASTIC-RELATED"/>
    <property type="match status" value="1"/>
</dbReference>
<dbReference type="PANTHER" id="PTHR10277">
    <property type="entry name" value="HOMOCITRATE SYNTHASE-RELATED"/>
    <property type="match status" value="1"/>
</dbReference>
<dbReference type="Pfam" id="PF22617">
    <property type="entry name" value="HCS_D2"/>
    <property type="match status" value="1"/>
</dbReference>
<dbReference type="Pfam" id="PF00682">
    <property type="entry name" value="HMGL-like"/>
    <property type="match status" value="1"/>
</dbReference>
<dbReference type="Pfam" id="PF08502">
    <property type="entry name" value="LeuA_dimer"/>
    <property type="match status" value="1"/>
</dbReference>
<dbReference type="SMART" id="SM00917">
    <property type="entry name" value="LeuA_dimer"/>
    <property type="match status" value="1"/>
</dbReference>
<dbReference type="SUPFAM" id="SSF110921">
    <property type="entry name" value="2-isopropylmalate synthase LeuA, allosteric (dimerisation) domain"/>
    <property type="match status" value="1"/>
</dbReference>
<dbReference type="SUPFAM" id="SSF51569">
    <property type="entry name" value="Aldolase"/>
    <property type="match status" value="1"/>
</dbReference>
<dbReference type="PROSITE" id="PS00815">
    <property type="entry name" value="AIPM_HOMOCIT_SYNTH_1"/>
    <property type="match status" value="1"/>
</dbReference>
<dbReference type="PROSITE" id="PS00816">
    <property type="entry name" value="AIPM_HOMOCIT_SYNTH_2"/>
    <property type="match status" value="1"/>
</dbReference>
<dbReference type="PROSITE" id="PS50991">
    <property type="entry name" value="PYR_CT"/>
    <property type="match status" value="1"/>
</dbReference>
<sequence length="515" mass="55586">MTDKLIIFDTTLRDGEQSPGASMTKEEKIRIAKQLERMKVDVIEAGFAASSNGDFDAIQTIASQVKDSTICSLARANDKDIQRAADALKPANSFRIHTFIATSPLHMEKKLRMTPDQVFEQARLAVRFARKFTDNIEFSPEDGSRSDMDFLCRVLEAVIAEGATTINIADTVGYGVPELYGNLVKTLRERIPNSDKAIFSVHCHNDLGMAVANSLAGVKIGGARQVECTINGLGERAGNTSLEEIVMAVKTRKDYFGLDLGIDTTQIVPASKLVSQITGFVVQPNKAVVGANAFAHASGIHQDGVLKARDTYEIMRAEDVGWTANKIVLGKLSGRNAFKQRLQELGVSLDSEAELNAAFARFKDLADRKAEIFDEDIIAIVTEEESALAQEHEHYKFVSLAQRSETGERPQAKVVFAVDGDEVAGEASGNGPVDATFNAIETEVGSGAELLLYSVNAITTGTQAQGEVTVRLSKSGRIVNGVGTDPDIVAASAKAYIAALNKLYSNADKLNPQRA</sequence>
<reference key="1">
    <citation type="journal article" date="2010" name="Genome Biol. Evol.">
        <title>Continuing evolution of Burkholderia mallei through genome reduction and large-scale rearrangements.</title>
        <authorList>
            <person name="Losada L."/>
            <person name="Ronning C.M."/>
            <person name="DeShazer D."/>
            <person name="Woods D."/>
            <person name="Fedorova N."/>
            <person name="Kim H.S."/>
            <person name="Shabalina S.A."/>
            <person name="Pearson T.R."/>
            <person name="Brinkac L."/>
            <person name="Tan P."/>
            <person name="Nandi T."/>
            <person name="Crabtree J."/>
            <person name="Badger J."/>
            <person name="Beckstrom-Sternberg S."/>
            <person name="Saqib M."/>
            <person name="Schutzer S.E."/>
            <person name="Keim P."/>
            <person name="Nierman W.C."/>
        </authorList>
    </citation>
    <scope>NUCLEOTIDE SEQUENCE [LARGE SCALE GENOMIC DNA]</scope>
    <source>
        <strain>668</strain>
    </source>
</reference>
<keyword id="KW-0028">Amino-acid biosynthesis</keyword>
<keyword id="KW-0100">Branched-chain amino acid biosynthesis</keyword>
<keyword id="KW-0963">Cytoplasm</keyword>
<keyword id="KW-0432">Leucine biosynthesis</keyword>
<keyword id="KW-0464">Manganese</keyword>
<keyword id="KW-0479">Metal-binding</keyword>
<keyword id="KW-0808">Transferase</keyword>
<organism>
    <name type="scientific">Burkholderia pseudomallei (strain 668)</name>
    <dbReference type="NCBI Taxonomy" id="320373"/>
    <lineage>
        <taxon>Bacteria</taxon>
        <taxon>Pseudomonadati</taxon>
        <taxon>Pseudomonadota</taxon>
        <taxon>Betaproteobacteria</taxon>
        <taxon>Burkholderiales</taxon>
        <taxon>Burkholderiaceae</taxon>
        <taxon>Burkholderia</taxon>
        <taxon>pseudomallei group</taxon>
    </lineage>
</organism>
<feature type="chain" id="PRO_1000149153" description="2-isopropylmalate synthase">
    <location>
        <begin position="1"/>
        <end position="515"/>
    </location>
</feature>
<feature type="domain" description="Pyruvate carboxyltransferase" evidence="1">
    <location>
        <begin position="5"/>
        <end position="268"/>
    </location>
</feature>
<feature type="region of interest" description="Regulatory domain" evidence="1">
    <location>
        <begin position="396"/>
        <end position="515"/>
    </location>
</feature>
<feature type="binding site" evidence="1">
    <location>
        <position position="14"/>
    </location>
    <ligand>
        <name>Mn(2+)</name>
        <dbReference type="ChEBI" id="CHEBI:29035"/>
    </ligand>
</feature>
<feature type="binding site" evidence="1">
    <location>
        <position position="202"/>
    </location>
    <ligand>
        <name>Mn(2+)</name>
        <dbReference type="ChEBI" id="CHEBI:29035"/>
    </ligand>
</feature>
<feature type="binding site" evidence="1">
    <location>
        <position position="204"/>
    </location>
    <ligand>
        <name>Mn(2+)</name>
        <dbReference type="ChEBI" id="CHEBI:29035"/>
    </ligand>
</feature>
<feature type="binding site" evidence="1">
    <location>
        <position position="239"/>
    </location>
    <ligand>
        <name>Mn(2+)</name>
        <dbReference type="ChEBI" id="CHEBI:29035"/>
    </ligand>
</feature>
<proteinExistence type="inferred from homology"/>
<protein>
    <recommendedName>
        <fullName evidence="1">2-isopropylmalate synthase</fullName>
        <ecNumber evidence="1">2.3.3.13</ecNumber>
    </recommendedName>
    <alternativeName>
        <fullName evidence="1">Alpha-IPM synthase</fullName>
    </alternativeName>
    <alternativeName>
        <fullName evidence="1">Alpha-isopropylmalate synthase</fullName>
    </alternativeName>
</protein>
<evidence type="ECO:0000255" key="1">
    <source>
        <dbReference type="HAMAP-Rule" id="MF_01025"/>
    </source>
</evidence>
<gene>
    <name evidence="1" type="primary">leuA</name>
    <name type="ordered locus">BURPS668_1279</name>
</gene>